<dbReference type="EMBL" id="DS499599">
    <property type="protein sequence ID" value="EDP49869.1"/>
    <property type="molecule type" value="Genomic_DNA"/>
</dbReference>
<dbReference type="EnsemblFungi" id="EDP49869">
    <property type="protein sequence ID" value="EDP49869"/>
    <property type="gene ID" value="AFUB_079020"/>
</dbReference>
<dbReference type="VEuPathDB" id="FungiDB:AFUB_079020"/>
<dbReference type="HOGENOM" id="CLU_1992109_0_0_1"/>
<dbReference type="Proteomes" id="UP000001699">
    <property type="component" value="Unassembled WGS sequence"/>
</dbReference>
<dbReference type="GO" id="GO:0005576">
    <property type="term" value="C:extracellular region"/>
    <property type="evidence" value="ECO:0007669"/>
    <property type="project" value="UniProtKB-SubCell"/>
</dbReference>
<dbReference type="GO" id="GO:0007155">
    <property type="term" value="P:cell adhesion"/>
    <property type="evidence" value="ECO:0007669"/>
    <property type="project" value="UniProtKB-KW"/>
</dbReference>
<dbReference type="InterPro" id="IPR008160">
    <property type="entry name" value="Collagen"/>
</dbReference>
<dbReference type="InterPro" id="IPR050938">
    <property type="entry name" value="Collagen_Structural_Proteins"/>
</dbReference>
<dbReference type="PANTHER" id="PTHR37456:SF3">
    <property type="entry name" value="COLLAGEN ALPHA-1(XXV) CHAIN"/>
    <property type="match status" value="1"/>
</dbReference>
<dbReference type="PANTHER" id="PTHR37456">
    <property type="entry name" value="SI:CH211-266K2.1"/>
    <property type="match status" value="1"/>
</dbReference>
<dbReference type="Pfam" id="PF01391">
    <property type="entry name" value="Collagen"/>
    <property type="match status" value="2"/>
</dbReference>
<evidence type="ECO:0000256" key="1">
    <source>
        <dbReference type="SAM" id="MobiDB-lite"/>
    </source>
</evidence>
<evidence type="ECO:0000269" key="2">
    <source>
    </source>
</evidence>
<evidence type="ECO:0000303" key="3">
    <source>
    </source>
</evidence>
<evidence type="ECO:0000305" key="4">
    <source>
    </source>
</evidence>
<name>CGNA_ASPFC</name>
<keyword id="KW-0130">Cell adhesion</keyword>
<keyword id="KW-0677">Repeat</keyword>
<keyword id="KW-0964">Secreted</keyword>
<keyword id="KW-0843">Virulence</keyword>
<protein>
    <recommendedName>
        <fullName evidence="3">Subtelomeric hrmA-associated cluster protein cgnA</fullName>
    </recommendedName>
    <alternativeName>
        <fullName evidence="3">collagen-like protein cgnA</fullName>
        <shortName evidence="3">CLP</shortName>
    </alternativeName>
</protein>
<reference key="1">
    <citation type="journal article" date="2008" name="PLoS Genet.">
        <title>Genomic islands in the pathogenic filamentous fungus Aspergillus fumigatus.</title>
        <authorList>
            <person name="Fedorova N.D."/>
            <person name="Khaldi N."/>
            <person name="Joardar V.S."/>
            <person name="Maiti R."/>
            <person name="Amedeo P."/>
            <person name="Anderson M.J."/>
            <person name="Crabtree J."/>
            <person name="Silva J.C."/>
            <person name="Badger J.H."/>
            <person name="Albarraq A."/>
            <person name="Angiuoli S."/>
            <person name="Bussey H."/>
            <person name="Bowyer P."/>
            <person name="Cotty P.J."/>
            <person name="Dyer P.S."/>
            <person name="Egan A."/>
            <person name="Galens K."/>
            <person name="Fraser-Liggett C.M."/>
            <person name="Haas B.J."/>
            <person name="Inman J.M."/>
            <person name="Kent R."/>
            <person name="Lemieux S."/>
            <person name="Malavazi I."/>
            <person name="Orvis J."/>
            <person name="Roemer T."/>
            <person name="Ronning C.M."/>
            <person name="Sundaram J.P."/>
            <person name="Sutton G."/>
            <person name="Turner G."/>
            <person name="Venter J.C."/>
            <person name="White O.R."/>
            <person name="Whitty B.R."/>
            <person name="Youngman P."/>
            <person name="Wolfe K.H."/>
            <person name="Goldman G.H."/>
            <person name="Wortman J.R."/>
            <person name="Jiang B."/>
            <person name="Denning D.W."/>
            <person name="Nierman W.C."/>
        </authorList>
    </citation>
    <scope>NUCLEOTIDE SEQUENCE [LARGE SCALE GENOMIC DNA]</scope>
    <source>
        <strain>CBS 144.89 / FGSC A1163 / CEA10</strain>
    </source>
</reference>
<reference key="2">
    <citation type="journal article" date="2019" name="Nat. Microbiol.">
        <title>Fungal biofilm morphology impacts hypoxia fitness and disease progression.</title>
        <authorList>
            <person name="Kowalski C.H."/>
            <person name="Kerkaert J.D."/>
            <person name="Liu K.W."/>
            <person name="Bond M.C."/>
            <person name="Hartmann R."/>
            <person name="Nadell C.D."/>
            <person name="Stajich J.E."/>
            <person name="Cramer R.A."/>
        </authorList>
    </citation>
    <scope>FUNCTION</scope>
    <scope>DISRUPTION PHENOTYPE</scope>
    <scope>INDUCTION</scope>
    <scope>DOMAIN</scope>
</reference>
<organism>
    <name type="scientific">Aspergillus fumigatus (strain CBS 144.89 / FGSC A1163 / CEA10)</name>
    <name type="common">Neosartorya fumigata</name>
    <dbReference type="NCBI Taxonomy" id="451804"/>
    <lineage>
        <taxon>Eukaryota</taxon>
        <taxon>Fungi</taxon>
        <taxon>Dikarya</taxon>
        <taxon>Ascomycota</taxon>
        <taxon>Pezizomycotina</taxon>
        <taxon>Eurotiomycetes</taxon>
        <taxon>Eurotiomycetidae</taxon>
        <taxon>Eurotiales</taxon>
        <taxon>Aspergillaceae</taxon>
        <taxon>Aspergillus</taxon>
        <taxon>Aspergillus subgen. Fumigati</taxon>
    </lineage>
</organism>
<comment type="function">
    <text evidence="2">Hypoxia responsive morphology factor that modulates the expression of the subtelomeric hrmA-associated cluster (HAC) containing genes that alter the hyphal surface (such as reduced total chitin or increased beta-glucan exposure) and perturb inter-hyphal interactions within the developing biofilms, resulting in a loss of vertically aligned polarized growing filaments (PubMed:31548684). Consequently, this hypoxia-typic morphotype (called H-MORPH) with altered biofilm architecture leads to increased hypoxia fitness, increased host inflammation, rapid disease progression, and mortality in a murine model of invasive aspergillosis (PubMed:31548684). GcnA is directly involved in the reduction total surface chitin and the increase beta-glucan exposure, and mediates the detachment of the extracellular matrix and especially of its component galactosaminogalactan (GAG) (PubMed:31548684).</text>
</comment>
<comment type="subcellular location">
    <subcellularLocation>
        <location evidence="4">Secreted</location>
    </subcellularLocation>
</comment>
<comment type="induction">
    <text evidence="2">Expression is regulated by the hypoxia responsive morphology factor A (hrmA).</text>
</comment>
<comment type="domain">
    <text evidence="2">Contains a tripeptide G-Q-I/S/R repeated region and lacks a canonical secretion signal.</text>
</comment>
<comment type="disruption phenotype">
    <text evidence="2">Impairs the formation of the hypoxia-typic morphotype, increases surface adherence and reduces the hypoxia fitness.</text>
</comment>
<proteinExistence type="evidence at transcript level"/>
<feature type="chain" id="PRO_0000460416" description="Subtelomeric hrmA-associated cluster protein cgnA">
    <location>
        <begin position="1"/>
        <end position="125"/>
    </location>
</feature>
<feature type="repeat" description="G-Q-I/R/S 1" evidence="4">
    <location>
        <begin position="11"/>
        <end position="13"/>
    </location>
</feature>
<feature type="repeat" description="G-Q-I/R/S 2" evidence="4">
    <location>
        <begin position="14"/>
        <end position="16"/>
    </location>
</feature>
<feature type="repeat" description="G-Q-I/R/S 3" evidence="4">
    <location>
        <begin position="17"/>
        <end position="19"/>
    </location>
</feature>
<feature type="repeat" description="G-Q-I/R/S 4" evidence="4">
    <location>
        <begin position="20"/>
        <end position="22"/>
    </location>
</feature>
<feature type="repeat" description="G-Q-I/R/S 5" evidence="4">
    <location>
        <begin position="23"/>
        <end position="25"/>
    </location>
</feature>
<feature type="repeat" description="G-Q-I/R/S 6" evidence="4">
    <location>
        <begin position="26"/>
        <end position="28"/>
    </location>
</feature>
<feature type="repeat" description="G-Q-I/R/S 7" evidence="4">
    <location>
        <begin position="29"/>
        <end position="31"/>
    </location>
</feature>
<feature type="repeat" description="G-Q-I/R/S 8" evidence="4">
    <location>
        <begin position="32"/>
        <end position="34"/>
    </location>
</feature>
<feature type="repeat" description="G-Q-I/R/S 9" evidence="4">
    <location>
        <begin position="35"/>
        <end position="37"/>
    </location>
</feature>
<feature type="repeat" description="G-Q-I/R/S 10" evidence="4">
    <location>
        <begin position="38"/>
        <end position="40"/>
    </location>
</feature>
<feature type="repeat" description="G-Q-I/R/S 11" evidence="4">
    <location>
        <begin position="41"/>
        <end position="43"/>
    </location>
</feature>
<feature type="repeat" description="G-Q-I/R/S 12" evidence="4">
    <location>
        <begin position="44"/>
        <end position="46"/>
    </location>
</feature>
<feature type="repeat" description="G-Q-I/R/S 13" evidence="4">
    <location>
        <begin position="47"/>
        <end position="49"/>
    </location>
</feature>
<feature type="repeat" description="G-Q-I/R/S 14" evidence="4">
    <location>
        <begin position="50"/>
        <end position="52"/>
    </location>
</feature>
<feature type="repeat" description="G-Q-I/R/S 15" evidence="4">
    <location>
        <begin position="53"/>
        <end position="55"/>
    </location>
</feature>
<feature type="repeat" description="G-Q-I/R/S 16" evidence="4">
    <location>
        <begin position="56"/>
        <end position="58"/>
    </location>
</feature>
<feature type="repeat" description="G-Q-I/R/S 17" evidence="4">
    <location>
        <begin position="59"/>
        <end position="61"/>
    </location>
</feature>
<feature type="repeat" description="G-Q-I/R/S 18" evidence="4">
    <location>
        <begin position="62"/>
        <end position="64"/>
    </location>
</feature>
<feature type="repeat" description="G-Q-I/R/S 19" evidence="4">
    <location>
        <begin position="65"/>
        <end position="67"/>
    </location>
</feature>
<feature type="repeat" description="G-Q-I/R/S 20" evidence="4">
    <location>
        <begin position="68"/>
        <end position="70"/>
    </location>
</feature>
<feature type="repeat" description="G-Q-I/R/S 21" evidence="4">
    <location>
        <begin position="71"/>
        <end position="73"/>
    </location>
</feature>
<feature type="repeat" description="G-Q-I/R/S 22" evidence="4">
    <location>
        <begin position="74"/>
        <end position="76"/>
    </location>
</feature>
<feature type="repeat" description="G-Q-I/R/S 23" evidence="4">
    <location>
        <begin position="77"/>
        <end position="79"/>
    </location>
</feature>
<feature type="region of interest" description="23 X 3 AA approximate tandem repeats of G-Q-I/R/S" evidence="4">
    <location>
        <begin position="11"/>
        <end position="79"/>
    </location>
</feature>
<feature type="region of interest" description="Disordered" evidence="1">
    <location>
        <begin position="15"/>
        <end position="57"/>
    </location>
</feature>
<gene>
    <name evidence="3" type="primary">cgnA</name>
    <name type="ORF">AFUB_079020</name>
</gene>
<sequence>MVLIIEIIKIGQIGPIGQRGQSGQRGQSGQRGQSGQIGQSGQSGQSGQSGQSGQIGQIGQIGQIGQIGQIGQIGQIGQARRTGRTGRTVHRRMLQASSSFNISPDISICRRATRNMGEEERPLGC</sequence>
<accession>B0Y8Y8</accession>